<organism>
    <name type="scientific">Pyrobaculum aerophilum (strain ATCC 51768 / DSM 7523 / JCM 9630 / CIP 104966 / NBRC 100827 / IM2)</name>
    <dbReference type="NCBI Taxonomy" id="178306"/>
    <lineage>
        <taxon>Archaea</taxon>
        <taxon>Thermoproteota</taxon>
        <taxon>Thermoprotei</taxon>
        <taxon>Thermoproteales</taxon>
        <taxon>Thermoproteaceae</taxon>
        <taxon>Pyrobaculum</taxon>
    </lineage>
</organism>
<dbReference type="EC" id="4.3.3.6" evidence="1"/>
<dbReference type="EC" id="3.5.1.2" evidence="1"/>
<dbReference type="EMBL" id="AE009441">
    <property type="protein sequence ID" value="AAL64458.1"/>
    <property type="molecule type" value="Genomic_DNA"/>
</dbReference>
<dbReference type="RefSeq" id="WP_011008926.1">
    <property type="nucleotide sequence ID" value="NC_003364.1"/>
</dbReference>
<dbReference type="SMR" id="Q8ZUE9"/>
<dbReference type="FunCoup" id="Q8ZUE9">
    <property type="interactions" value="86"/>
</dbReference>
<dbReference type="STRING" id="178306.PAE2820"/>
<dbReference type="MEROPS" id="C26.A32"/>
<dbReference type="EnsemblBacteria" id="AAL64458">
    <property type="protein sequence ID" value="AAL64458"/>
    <property type="gene ID" value="PAE2820"/>
</dbReference>
<dbReference type="GeneID" id="1463620"/>
<dbReference type="KEGG" id="pai:PAE2820"/>
<dbReference type="PATRIC" id="fig|178306.9.peg.2102"/>
<dbReference type="eggNOG" id="arCOG00034">
    <property type="taxonomic scope" value="Archaea"/>
</dbReference>
<dbReference type="HOGENOM" id="CLU_069674_2_0_2"/>
<dbReference type="InParanoid" id="Q8ZUE9"/>
<dbReference type="UniPathway" id="UPA00245"/>
<dbReference type="Proteomes" id="UP000002439">
    <property type="component" value="Chromosome"/>
</dbReference>
<dbReference type="GO" id="GO:0005829">
    <property type="term" value="C:cytosol"/>
    <property type="evidence" value="ECO:0000318"/>
    <property type="project" value="GO_Central"/>
</dbReference>
<dbReference type="GO" id="GO:1903600">
    <property type="term" value="C:glutaminase complex"/>
    <property type="evidence" value="ECO:0000318"/>
    <property type="project" value="GO_Central"/>
</dbReference>
<dbReference type="GO" id="GO:0004359">
    <property type="term" value="F:glutaminase activity"/>
    <property type="evidence" value="ECO:0007669"/>
    <property type="project" value="UniProtKB-UniRule"/>
</dbReference>
<dbReference type="GO" id="GO:0036381">
    <property type="term" value="F:pyridoxal 5'-phosphate synthase (glutamine hydrolysing) activity"/>
    <property type="evidence" value="ECO:0007669"/>
    <property type="project" value="UniProtKB-UniRule"/>
</dbReference>
<dbReference type="GO" id="GO:0006543">
    <property type="term" value="P:glutamine catabolic process"/>
    <property type="evidence" value="ECO:0007669"/>
    <property type="project" value="UniProtKB-UniRule"/>
</dbReference>
<dbReference type="GO" id="GO:0042823">
    <property type="term" value="P:pyridoxal phosphate biosynthetic process"/>
    <property type="evidence" value="ECO:0000318"/>
    <property type="project" value="GO_Central"/>
</dbReference>
<dbReference type="GO" id="GO:0008614">
    <property type="term" value="P:pyridoxine metabolic process"/>
    <property type="evidence" value="ECO:0000318"/>
    <property type="project" value="GO_Central"/>
</dbReference>
<dbReference type="CDD" id="cd01749">
    <property type="entry name" value="GATase1_PB"/>
    <property type="match status" value="1"/>
</dbReference>
<dbReference type="FunFam" id="3.40.50.880:FF:000041">
    <property type="entry name" value="Glutamine amidotransferase subunit pdxT, putative"/>
    <property type="match status" value="1"/>
</dbReference>
<dbReference type="Gene3D" id="3.40.50.880">
    <property type="match status" value="1"/>
</dbReference>
<dbReference type="HAMAP" id="MF_01615">
    <property type="entry name" value="PdxT"/>
    <property type="match status" value="1"/>
</dbReference>
<dbReference type="InterPro" id="IPR029062">
    <property type="entry name" value="Class_I_gatase-like"/>
</dbReference>
<dbReference type="InterPro" id="IPR002161">
    <property type="entry name" value="PdxT/SNO"/>
</dbReference>
<dbReference type="InterPro" id="IPR021196">
    <property type="entry name" value="PdxT/SNO_CS"/>
</dbReference>
<dbReference type="NCBIfam" id="TIGR03800">
    <property type="entry name" value="PLP_synth_Pdx2"/>
    <property type="match status" value="1"/>
</dbReference>
<dbReference type="PANTHER" id="PTHR31559">
    <property type="entry name" value="PYRIDOXAL 5'-PHOSPHATE SYNTHASE SUBUNIT SNO"/>
    <property type="match status" value="1"/>
</dbReference>
<dbReference type="PANTHER" id="PTHR31559:SF0">
    <property type="entry name" value="PYRIDOXAL 5'-PHOSPHATE SYNTHASE SUBUNIT SNO1-RELATED"/>
    <property type="match status" value="1"/>
</dbReference>
<dbReference type="Pfam" id="PF01174">
    <property type="entry name" value="SNO"/>
    <property type="match status" value="1"/>
</dbReference>
<dbReference type="PIRSF" id="PIRSF005639">
    <property type="entry name" value="Glut_amidoT_SNO"/>
    <property type="match status" value="1"/>
</dbReference>
<dbReference type="SMART" id="SM01211">
    <property type="entry name" value="GATase_5"/>
    <property type="match status" value="1"/>
</dbReference>
<dbReference type="SUPFAM" id="SSF52317">
    <property type="entry name" value="Class I glutamine amidotransferase-like"/>
    <property type="match status" value="1"/>
</dbReference>
<dbReference type="PROSITE" id="PS01236">
    <property type="entry name" value="PDXT_SNO_1"/>
    <property type="match status" value="1"/>
</dbReference>
<dbReference type="PROSITE" id="PS51130">
    <property type="entry name" value="PDXT_SNO_2"/>
    <property type="match status" value="1"/>
</dbReference>
<protein>
    <recommendedName>
        <fullName evidence="1">Pyridoxal 5'-phosphate synthase subunit PdxT</fullName>
        <ecNumber evidence="1">4.3.3.6</ecNumber>
    </recommendedName>
    <alternativeName>
        <fullName evidence="1">Pdx2</fullName>
    </alternativeName>
    <alternativeName>
        <fullName evidence="1">Pyridoxal 5'-phosphate synthase glutaminase subunit</fullName>
        <ecNumber evidence="1">3.5.1.2</ecNumber>
    </alternativeName>
</protein>
<evidence type="ECO:0000255" key="1">
    <source>
        <dbReference type="HAMAP-Rule" id="MF_01615"/>
    </source>
</evidence>
<gene>
    <name evidence="1" type="primary">pdxT</name>
    <name type="ordered locus">PAE2820</name>
</gene>
<feature type="chain" id="PRO_0000135687" description="Pyridoxal 5'-phosphate synthase subunit PdxT">
    <location>
        <begin position="1"/>
        <end position="204"/>
    </location>
</feature>
<feature type="active site" description="Nucleophile" evidence="1">
    <location>
        <position position="84"/>
    </location>
</feature>
<feature type="active site" description="Charge relay system" evidence="1">
    <location>
        <position position="184"/>
    </location>
</feature>
<feature type="active site" description="Charge relay system" evidence="1">
    <location>
        <position position="186"/>
    </location>
</feature>
<feature type="binding site" evidence="1">
    <location>
        <begin position="52"/>
        <end position="54"/>
    </location>
    <ligand>
        <name>L-glutamine</name>
        <dbReference type="ChEBI" id="CHEBI:58359"/>
    </ligand>
</feature>
<feature type="binding site" evidence="1">
    <location>
        <position position="116"/>
    </location>
    <ligand>
        <name>L-glutamine</name>
        <dbReference type="ChEBI" id="CHEBI:58359"/>
    </ligand>
</feature>
<feature type="binding site" evidence="1">
    <location>
        <begin position="143"/>
        <end position="144"/>
    </location>
    <ligand>
        <name>L-glutamine</name>
        <dbReference type="ChEBI" id="CHEBI:58359"/>
    </ligand>
</feature>
<keyword id="KW-0315">Glutamine amidotransferase</keyword>
<keyword id="KW-0378">Hydrolase</keyword>
<keyword id="KW-0456">Lyase</keyword>
<keyword id="KW-0663">Pyridoxal phosphate</keyword>
<keyword id="KW-1185">Reference proteome</keyword>
<proteinExistence type="inferred from homology"/>
<reference key="1">
    <citation type="journal article" date="2002" name="Proc. Natl. Acad. Sci. U.S.A.">
        <title>Genome sequence of the hyperthermophilic crenarchaeon Pyrobaculum aerophilum.</title>
        <authorList>
            <person name="Fitz-Gibbon S.T."/>
            <person name="Ladner H."/>
            <person name="Kim U.-J."/>
            <person name="Stetter K.O."/>
            <person name="Simon M.I."/>
            <person name="Miller J.H."/>
        </authorList>
    </citation>
    <scope>NUCLEOTIDE SEQUENCE [LARGE SCALE GENOMIC DNA]</scope>
    <source>
        <strain>ATCC 51768 / DSM 7523 / JCM 9630 / CIP 104966 / NBRC 100827 / IM2</strain>
    </source>
</reference>
<accession>Q8ZUE9</accession>
<name>PDXT_PYRAE</name>
<comment type="function">
    <text evidence="1">Catalyzes the hydrolysis of glutamine to glutamate and ammonia as part of the biosynthesis of pyridoxal 5'-phosphate. The resulting ammonia molecule is channeled to the active site of PdxS.</text>
</comment>
<comment type="catalytic activity">
    <reaction evidence="1">
        <text>aldehydo-D-ribose 5-phosphate + D-glyceraldehyde 3-phosphate + L-glutamine = pyridoxal 5'-phosphate + L-glutamate + phosphate + 3 H2O + H(+)</text>
        <dbReference type="Rhea" id="RHEA:31507"/>
        <dbReference type="ChEBI" id="CHEBI:15377"/>
        <dbReference type="ChEBI" id="CHEBI:15378"/>
        <dbReference type="ChEBI" id="CHEBI:29985"/>
        <dbReference type="ChEBI" id="CHEBI:43474"/>
        <dbReference type="ChEBI" id="CHEBI:58273"/>
        <dbReference type="ChEBI" id="CHEBI:58359"/>
        <dbReference type="ChEBI" id="CHEBI:59776"/>
        <dbReference type="ChEBI" id="CHEBI:597326"/>
        <dbReference type="EC" id="4.3.3.6"/>
    </reaction>
</comment>
<comment type="catalytic activity">
    <reaction evidence="1">
        <text>L-glutamine + H2O = L-glutamate + NH4(+)</text>
        <dbReference type="Rhea" id="RHEA:15889"/>
        <dbReference type="ChEBI" id="CHEBI:15377"/>
        <dbReference type="ChEBI" id="CHEBI:28938"/>
        <dbReference type="ChEBI" id="CHEBI:29985"/>
        <dbReference type="ChEBI" id="CHEBI:58359"/>
        <dbReference type="EC" id="3.5.1.2"/>
    </reaction>
</comment>
<comment type="pathway">
    <text evidence="1">Cofactor biosynthesis; pyridoxal 5'-phosphate biosynthesis.</text>
</comment>
<comment type="subunit">
    <text evidence="1">In the presence of PdxS, forms a dodecamer of heterodimers. Only shows activity in the heterodimer.</text>
</comment>
<comment type="similarity">
    <text evidence="1">Belongs to the glutaminase PdxT/SNO family.</text>
</comment>
<sequence length="204" mass="21560">MKIGVLALQGDVEEHANAFKEAGREVGVDVDVVEVKKPGDLKDIKALAIPGGESTTIGRLAKRTGLLDAVKKAIEGGVPALGTCAGAIFMAKEVKDAVVGATGQPVLGVMDIAVVRNAFGRQRESFEAEVVLENLGKLKAVFIRAPAFVRAWGSAKLLAPLRHNQLGLVYAAAVQNNMVATAFHPELTTTAVHKWVINMALGRF</sequence>